<sequence length="190" mass="21579">MAAIKPITTYKGKIVPLFNDNIDTDQIIPKVHLKRISKSGFGPFAFDEWRYLPDGSDNPDFNPNKPQYKGASILITGDNFGCGSSREHAAWALKDYGFHIIIAGSFSDIFYMNCTKNAMLPIVLEKSAREHLAQYVEIEVDLPNQTVSSPDKRFHFEIDETWKNKLVNGLDDIAITLQYESLIEKYEKSL</sequence>
<evidence type="ECO:0000255" key="1">
    <source>
        <dbReference type="HAMAP-Rule" id="MF_01031"/>
    </source>
</evidence>
<keyword id="KW-0028">Amino-acid biosynthesis</keyword>
<keyword id="KW-0100">Branched-chain amino acid biosynthesis</keyword>
<keyword id="KW-0432">Leucine biosynthesis</keyword>
<keyword id="KW-0456">Lyase</keyword>
<dbReference type="EC" id="4.2.1.33" evidence="1"/>
<dbReference type="EMBL" id="AP009351">
    <property type="protein sequence ID" value="BAF68238.1"/>
    <property type="molecule type" value="Genomic_DNA"/>
</dbReference>
<dbReference type="RefSeq" id="WP_000718955.1">
    <property type="nucleotide sequence ID" value="NZ_JBBIAE010000015.1"/>
</dbReference>
<dbReference type="SMR" id="A6QIQ6"/>
<dbReference type="KEGG" id="sae:NWMN_1966"/>
<dbReference type="HOGENOM" id="CLU_081378_0_3_9"/>
<dbReference type="UniPathway" id="UPA00048">
    <property type="reaction ID" value="UER00071"/>
</dbReference>
<dbReference type="Proteomes" id="UP000006386">
    <property type="component" value="Chromosome"/>
</dbReference>
<dbReference type="GO" id="GO:0009316">
    <property type="term" value="C:3-isopropylmalate dehydratase complex"/>
    <property type="evidence" value="ECO:0007669"/>
    <property type="project" value="InterPro"/>
</dbReference>
<dbReference type="GO" id="GO:0003861">
    <property type="term" value="F:3-isopropylmalate dehydratase activity"/>
    <property type="evidence" value="ECO:0007669"/>
    <property type="project" value="UniProtKB-UniRule"/>
</dbReference>
<dbReference type="GO" id="GO:0009098">
    <property type="term" value="P:L-leucine biosynthetic process"/>
    <property type="evidence" value="ECO:0007669"/>
    <property type="project" value="UniProtKB-UniRule"/>
</dbReference>
<dbReference type="CDD" id="cd01577">
    <property type="entry name" value="IPMI_Swivel"/>
    <property type="match status" value="1"/>
</dbReference>
<dbReference type="FunFam" id="3.20.19.10:FF:000003">
    <property type="entry name" value="3-isopropylmalate dehydratase small subunit"/>
    <property type="match status" value="1"/>
</dbReference>
<dbReference type="Gene3D" id="3.20.19.10">
    <property type="entry name" value="Aconitase, domain 4"/>
    <property type="match status" value="1"/>
</dbReference>
<dbReference type="HAMAP" id="MF_01031">
    <property type="entry name" value="LeuD_type1"/>
    <property type="match status" value="1"/>
</dbReference>
<dbReference type="InterPro" id="IPR004431">
    <property type="entry name" value="3-IsopropMal_deHydase_ssu"/>
</dbReference>
<dbReference type="InterPro" id="IPR015928">
    <property type="entry name" value="Aconitase/3IPM_dehydase_swvl"/>
</dbReference>
<dbReference type="InterPro" id="IPR000573">
    <property type="entry name" value="AconitaseA/IPMdHydase_ssu_swvl"/>
</dbReference>
<dbReference type="InterPro" id="IPR033940">
    <property type="entry name" value="IPMI_Swivel"/>
</dbReference>
<dbReference type="InterPro" id="IPR050075">
    <property type="entry name" value="LeuD"/>
</dbReference>
<dbReference type="NCBIfam" id="TIGR00171">
    <property type="entry name" value="leuD"/>
    <property type="match status" value="1"/>
</dbReference>
<dbReference type="NCBIfam" id="NF002458">
    <property type="entry name" value="PRK01641.1"/>
    <property type="match status" value="1"/>
</dbReference>
<dbReference type="PANTHER" id="PTHR43345:SF5">
    <property type="entry name" value="3-ISOPROPYLMALATE DEHYDRATASE SMALL SUBUNIT"/>
    <property type="match status" value="1"/>
</dbReference>
<dbReference type="PANTHER" id="PTHR43345">
    <property type="entry name" value="3-ISOPROPYLMALATE DEHYDRATASE SMALL SUBUNIT 2-RELATED-RELATED"/>
    <property type="match status" value="1"/>
</dbReference>
<dbReference type="Pfam" id="PF00694">
    <property type="entry name" value="Aconitase_C"/>
    <property type="match status" value="1"/>
</dbReference>
<dbReference type="SUPFAM" id="SSF52016">
    <property type="entry name" value="LeuD/IlvD-like"/>
    <property type="match status" value="1"/>
</dbReference>
<proteinExistence type="inferred from homology"/>
<organism>
    <name type="scientific">Staphylococcus aureus (strain Newman)</name>
    <dbReference type="NCBI Taxonomy" id="426430"/>
    <lineage>
        <taxon>Bacteria</taxon>
        <taxon>Bacillati</taxon>
        <taxon>Bacillota</taxon>
        <taxon>Bacilli</taxon>
        <taxon>Bacillales</taxon>
        <taxon>Staphylococcaceae</taxon>
        <taxon>Staphylococcus</taxon>
    </lineage>
</organism>
<comment type="function">
    <text evidence="1">Catalyzes the isomerization between 2-isopropylmalate and 3-isopropylmalate, via the formation of 2-isopropylmaleate.</text>
</comment>
<comment type="catalytic activity">
    <reaction evidence="1">
        <text>(2R,3S)-3-isopropylmalate = (2S)-2-isopropylmalate</text>
        <dbReference type="Rhea" id="RHEA:32287"/>
        <dbReference type="ChEBI" id="CHEBI:1178"/>
        <dbReference type="ChEBI" id="CHEBI:35121"/>
        <dbReference type="EC" id="4.2.1.33"/>
    </reaction>
</comment>
<comment type="pathway">
    <text evidence="1">Amino-acid biosynthesis; L-leucine biosynthesis; L-leucine from 3-methyl-2-oxobutanoate: step 2/4.</text>
</comment>
<comment type="subunit">
    <text evidence="1">Heterodimer of LeuC and LeuD.</text>
</comment>
<comment type="similarity">
    <text evidence="1">Belongs to the LeuD family. LeuD type 1 subfamily.</text>
</comment>
<protein>
    <recommendedName>
        <fullName evidence="1">3-isopropylmalate dehydratase small subunit</fullName>
        <ecNumber evidence="1">4.2.1.33</ecNumber>
    </recommendedName>
    <alternativeName>
        <fullName evidence="1">Alpha-IPM isomerase</fullName>
        <shortName evidence="1">IPMI</shortName>
    </alternativeName>
    <alternativeName>
        <fullName evidence="1">Isopropylmalate isomerase</fullName>
    </alternativeName>
</protein>
<name>LEUD_STAAE</name>
<reference key="1">
    <citation type="journal article" date="2008" name="J. Bacteriol.">
        <title>Genome sequence of Staphylococcus aureus strain Newman and comparative analysis of staphylococcal genomes: polymorphism and evolution of two major pathogenicity islands.</title>
        <authorList>
            <person name="Baba T."/>
            <person name="Bae T."/>
            <person name="Schneewind O."/>
            <person name="Takeuchi F."/>
            <person name="Hiramatsu K."/>
        </authorList>
    </citation>
    <scope>NUCLEOTIDE SEQUENCE [LARGE SCALE GENOMIC DNA]</scope>
    <source>
        <strain>Newman</strain>
    </source>
</reference>
<accession>A6QIQ6</accession>
<gene>
    <name evidence="1" type="primary">leuD</name>
    <name type="ordered locus">NWMN_1966</name>
</gene>
<feature type="chain" id="PRO_1000072960" description="3-isopropylmalate dehydratase small subunit">
    <location>
        <begin position="1"/>
        <end position="190"/>
    </location>
</feature>